<evidence type="ECO:0000255" key="1">
    <source>
        <dbReference type="HAMAP-Rule" id="MF_01409"/>
    </source>
</evidence>
<organism>
    <name type="scientific">Pyrococcus horikoshii (strain ATCC 700860 / DSM 12428 / JCM 9974 / NBRC 100139 / OT-3)</name>
    <dbReference type="NCBI Taxonomy" id="70601"/>
    <lineage>
        <taxon>Archaea</taxon>
        <taxon>Methanobacteriati</taxon>
        <taxon>Methanobacteriota</taxon>
        <taxon>Thermococci</taxon>
        <taxon>Thermococcales</taxon>
        <taxon>Thermococcaceae</taxon>
        <taxon>Pyrococcus</taxon>
    </lineage>
</organism>
<protein>
    <recommendedName>
        <fullName evidence="1">Hydroxymethylglutaryl-CoA synthase</fullName>
        <shortName evidence="1">HMG-CoA synthase</shortName>
        <shortName evidence="1">HMGCS</shortName>
        <ecNumber evidence="1">2.3.3.10</ecNumber>
    </recommendedName>
</protein>
<gene>
    <name type="ordered locus">PH0677</name>
</gene>
<dbReference type="EC" id="2.3.3.10" evidence="1"/>
<dbReference type="EMBL" id="BA000001">
    <property type="protein sequence ID" value="BAA29768.1"/>
    <property type="molecule type" value="Genomic_DNA"/>
</dbReference>
<dbReference type="PIR" id="F71113">
    <property type="entry name" value="F71113"/>
</dbReference>
<dbReference type="RefSeq" id="WP_010884770.1">
    <property type="nucleotide sequence ID" value="NC_000961.1"/>
</dbReference>
<dbReference type="SMR" id="O58410"/>
<dbReference type="STRING" id="70601.gene:9377622"/>
<dbReference type="EnsemblBacteria" id="BAA29768">
    <property type="protein sequence ID" value="BAA29768"/>
    <property type="gene ID" value="BAA29768"/>
</dbReference>
<dbReference type="GeneID" id="1443005"/>
<dbReference type="KEGG" id="pho:PH0677"/>
<dbReference type="eggNOG" id="arCOG01767">
    <property type="taxonomic scope" value="Archaea"/>
</dbReference>
<dbReference type="OrthoDB" id="5812at2157"/>
<dbReference type="UniPathway" id="UPA00058">
    <property type="reaction ID" value="UER00102"/>
</dbReference>
<dbReference type="Proteomes" id="UP000000752">
    <property type="component" value="Chromosome"/>
</dbReference>
<dbReference type="GO" id="GO:0003985">
    <property type="term" value="F:acetyl-CoA C-acetyltransferase activity"/>
    <property type="evidence" value="ECO:0007669"/>
    <property type="project" value="UniProtKB-UniRule"/>
</dbReference>
<dbReference type="GO" id="GO:0004421">
    <property type="term" value="F:hydroxymethylglutaryl-CoA synthase activity"/>
    <property type="evidence" value="ECO:0007669"/>
    <property type="project" value="InterPro"/>
</dbReference>
<dbReference type="GO" id="GO:0010142">
    <property type="term" value="P:farnesyl diphosphate biosynthetic process, mevalonate pathway"/>
    <property type="evidence" value="ECO:0007669"/>
    <property type="project" value="TreeGrafter"/>
</dbReference>
<dbReference type="GO" id="GO:0019287">
    <property type="term" value="P:isopentenyl diphosphate biosynthetic process, mevalonate pathway"/>
    <property type="evidence" value="ECO:0007669"/>
    <property type="project" value="UniProtKB-UniRule"/>
</dbReference>
<dbReference type="CDD" id="cd00827">
    <property type="entry name" value="init_cond_enzymes"/>
    <property type="match status" value="1"/>
</dbReference>
<dbReference type="FunFam" id="3.40.47.10:FF:000046">
    <property type="entry name" value="UPF0219 protein M1627_1703"/>
    <property type="match status" value="1"/>
</dbReference>
<dbReference type="Gene3D" id="3.40.47.10">
    <property type="match status" value="1"/>
</dbReference>
<dbReference type="HAMAP" id="MF_01409">
    <property type="entry name" value="HMG_CoA_synth_arch"/>
    <property type="match status" value="1"/>
</dbReference>
<dbReference type="InterPro" id="IPR013747">
    <property type="entry name" value="ACP_syn_III_C"/>
</dbReference>
<dbReference type="InterPro" id="IPR004656">
    <property type="entry name" value="HMG_CoA_Synthase"/>
</dbReference>
<dbReference type="InterPro" id="IPR016039">
    <property type="entry name" value="Thiolase-like"/>
</dbReference>
<dbReference type="NCBIfam" id="TIGR00748">
    <property type="entry name" value="HMG_CoA_syn_Arc"/>
    <property type="match status" value="1"/>
</dbReference>
<dbReference type="NCBIfam" id="NF003274">
    <property type="entry name" value="PRK04262.1"/>
    <property type="match status" value="1"/>
</dbReference>
<dbReference type="PANTHER" id="PTHR43323">
    <property type="entry name" value="3-HYDROXY-3-METHYLGLUTARYL COENZYME A SYNTHASE"/>
    <property type="match status" value="1"/>
</dbReference>
<dbReference type="PANTHER" id="PTHR43323:SF2">
    <property type="entry name" value="HYDROXYMETHYLGLUTARYL-COA SYNTHASE"/>
    <property type="match status" value="1"/>
</dbReference>
<dbReference type="Pfam" id="PF08541">
    <property type="entry name" value="ACP_syn_III_C"/>
    <property type="match status" value="1"/>
</dbReference>
<dbReference type="SUPFAM" id="SSF53901">
    <property type="entry name" value="Thiolase-like"/>
    <property type="match status" value="2"/>
</dbReference>
<proteinExistence type="inferred from homology"/>
<accession>O58410</accession>
<sequence length="350" mass="38100">MGKLLKPIKDVGIVGYGAYVPMYRIRNEEIGRVWGISNFPIEEKAVPGLDEDAITIGIEAARNALKRAKIDPKDIRAIWFGSESKPYAVKPSSTVIAEAIGATPDLEAADFEFACKAGTEALQAAIGFVASGMAKYAMAIGADTAQGRPGDHLEFTAGAGGAAFIIGEKSSETVAYFEGSYSYVTDTPDFWRRQHEHYPRHGNRFTGEPAYFHHVVTAAKTLMDELGLTPEDFDYAVFHQPNVKFPLVAARMLGIPKEKVLPGLLSGRIGNTYSGATMVGISAVLDIAKPGDRILWVSFGSGAGSDAFSIVVQDAIEEKRNLAPKVEDYIKRRKVIDYALYAKARRKYII</sequence>
<name>HMGCS_PYRHO</name>
<keyword id="KW-0012">Acyltransferase</keyword>
<keyword id="KW-0414">Isoprene biosynthesis</keyword>
<keyword id="KW-0808">Transferase</keyword>
<reference key="1">
    <citation type="journal article" date="1998" name="DNA Res.">
        <title>Complete sequence and gene organization of the genome of a hyper-thermophilic archaebacterium, Pyrococcus horikoshii OT3.</title>
        <authorList>
            <person name="Kawarabayasi Y."/>
            <person name="Sawada M."/>
            <person name="Horikawa H."/>
            <person name="Haikawa Y."/>
            <person name="Hino Y."/>
            <person name="Yamamoto S."/>
            <person name="Sekine M."/>
            <person name="Baba S."/>
            <person name="Kosugi H."/>
            <person name="Hosoyama A."/>
            <person name="Nagai Y."/>
            <person name="Sakai M."/>
            <person name="Ogura K."/>
            <person name="Otsuka R."/>
            <person name="Nakazawa H."/>
            <person name="Takamiya M."/>
            <person name="Ohfuku Y."/>
            <person name="Funahashi T."/>
            <person name="Tanaka T."/>
            <person name="Kudoh Y."/>
            <person name="Yamazaki J."/>
            <person name="Kushida N."/>
            <person name="Oguchi A."/>
            <person name="Aoki K."/>
            <person name="Yoshizawa T."/>
            <person name="Nakamura Y."/>
            <person name="Robb F.T."/>
            <person name="Horikoshi K."/>
            <person name="Masuchi Y."/>
            <person name="Shizuya H."/>
            <person name="Kikuchi H."/>
        </authorList>
    </citation>
    <scope>NUCLEOTIDE SEQUENCE [LARGE SCALE GENOMIC DNA]</scope>
    <source>
        <strain>ATCC 700860 / DSM 12428 / JCM 9974 / NBRC 100139 / OT-3</strain>
    </source>
</reference>
<comment type="function">
    <text evidence="1">Catalyzes the condensation of acetyl-CoA with acetoacetyl-CoA to form 3-hydroxy-3-methylglutaryl-CoA (HMG-CoA). Functions in the mevalonate (MVA) pathway leading to isopentenyl diphosphate (IPP), a key precursor for the biosynthesis of isoprenoid compounds that are building blocks of archaeal membrane lipids.</text>
</comment>
<comment type="catalytic activity">
    <reaction evidence="1">
        <text>acetoacetyl-CoA + acetyl-CoA + H2O = (3S)-3-hydroxy-3-methylglutaryl-CoA + CoA + H(+)</text>
        <dbReference type="Rhea" id="RHEA:10188"/>
        <dbReference type="ChEBI" id="CHEBI:15377"/>
        <dbReference type="ChEBI" id="CHEBI:15378"/>
        <dbReference type="ChEBI" id="CHEBI:43074"/>
        <dbReference type="ChEBI" id="CHEBI:57286"/>
        <dbReference type="ChEBI" id="CHEBI:57287"/>
        <dbReference type="ChEBI" id="CHEBI:57288"/>
        <dbReference type="EC" id="2.3.3.10"/>
    </reaction>
    <physiologicalReaction direction="left-to-right" evidence="1">
        <dbReference type="Rhea" id="RHEA:10189"/>
    </physiologicalReaction>
</comment>
<comment type="pathway">
    <text evidence="1">Metabolic intermediate biosynthesis; (R)-mevalonate biosynthesis; (R)-mevalonate from acetyl-CoA: step 2/3.</text>
</comment>
<comment type="subunit">
    <text evidence="1">Interacts with acetoacetyl-CoA thiolase that catalyzes the precedent step in the pathway and with a DUF35 protein. The acetoacetyl-CoA thiolase/HMG-CoA synthase complex channels the intermediate via a fused CoA-binding site, which allows for efficient coupling of the endergonic thiolase reaction with the exergonic HMGCS reaction.</text>
</comment>
<comment type="similarity">
    <text evidence="1">Belongs to the thiolase-like superfamily. Archaeal HMG-CoA synthase family.</text>
</comment>
<feature type="chain" id="PRO_0000057623" description="Hydroxymethylglutaryl-CoA synthase">
    <location>
        <begin position="1"/>
        <end position="350"/>
    </location>
</feature>
<feature type="active site" description="Proton donor/acceptor" evidence="1">
    <location>
        <position position="83"/>
    </location>
</feature>
<feature type="active site" description="Acyl-thioester intermediate" evidence="1">
    <location>
        <position position="115"/>
    </location>
</feature>
<feature type="active site" description="Proton donor/acceptor" evidence="1">
    <location>
        <position position="239"/>
    </location>
</feature>
<feature type="binding site" evidence="1">
    <location>
        <position position="115"/>
    </location>
    <ligand>
        <name>(3S)-3-hydroxy-3-methylglutaryl-CoA</name>
        <dbReference type="ChEBI" id="CHEBI:43074"/>
    </ligand>
</feature>
<feature type="binding site" evidence="1">
    <location>
        <position position="156"/>
    </location>
    <ligand>
        <name>(3S)-3-hydroxy-3-methylglutaryl-CoA</name>
        <dbReference type="ChEBI" id="CHEBI:43074"/>
    </ligand>
</feature>
<feature type="binding site" evidence="1">
    <location>
        <position position="204"/>
    </location>
    <ligand>
        <name>CoA</name>
        <dbReference type="ChEBI" id="CHEBI:57287"/>
        <note>ligand shared with acetoacetyl-CoA thiolase</note>
    </ligand>
</feature>
<feature type="binding site" evidence="1">
    <location>
        <position position="206"/>
    </location>
    <ligand>
        <name>(3S)-3-hydroxy-3-methylglutaryl-CoA</name>
        <dbReference type="ChEBI" id="CHEBI:43074"/>
    </ligand>
</feature>
<feature type="binding site" evidence="1">
    <location>
        <position position="239"/>
    </location>
    <ligand>
        <name>(3S)-3-hydroxy-3-methylglutaryl-CoA</name>
        <dbReference type="ChEBI" id="CHEBI:43074"/>
    </ligand>
</feature>
<feature type="binding site" evidence="1">
    <location>
        <position position="244"/>
    </location>
    <ligand>
        <name>CoA</name>
        <dbReference type="ChEBI" id="CHEBI:57287"/>
        <note>ligand shared with acetoacetyl-CoA thiolase</note>
    </ligand>
</feature>
<feature type="binding site" evidence="1">
    <location>
        <position position="271"/>
    </location>
    <ligand>
        <name>(3S)-3-hydroxy-3-methylglutaryl-CoA</name>
        <dbReference type="ChEBI" id="CHEBI:43074"/>
    </ligand>
</feature>
<feature type="binding site" evidence="1">
    <location>
        <position position="301"/>
    </location>
    <ligand>
        <name>(3S)-3-hydroxy-3-methylglutaryl-CoA</name>
        <dbReference type="ChEBI" id="CHEBI:43074"/>
    </ligand>
</feature>